<comment type="function">
    <text evidence="1">This protein is involved in the repair of mismatches in DNA. It is required for dam-dependent methyl-directed DNA mismatch repair. May act as a 'molecular matchmaker', a protein that promotes the formation of a stable complex between two or more DNA-binding proteins in an ATP-dependent manner without itself being part of a final effector complex.</text>
</comment>
<comment type="similarity">
    <text evidence="1">Belongs to the DNA mismatch repair MutL/HexB family.</text>
</comment>
<proteinExistence type="inferred from homology"/>
<feature type="chain" id="PRO_1000096651" description="DNA mismatch repair protein MutL">
    <location>
        <begin position="1"/>
        <end position="608"/>
    </location>
</feature>
<protein>
    <recommendedName>
        <fullName evidence="1">DNA mismatch repair protein MutL</fullName>
    </recommendedName>
</protein>
<evidence type="ECO:0000255" key="1">
    <source>
        <dbReference type="HAMAP-Rule" id="MF_00149"/>
    </source>
</evidence>
<dbReference type="EMBL" id="CP001055">
    <property type="protein sequence ID" value="ACC97777.1"/>
    <property type="molecule type" value="Genomic_DNA"/>
</dbReference>
<dbReference type="RefSeq" id="WP_012414392.1">
    <property type="nucleotide sequence ID" value="NC_010644.1"/>
</dbReference>
<dbReference type="SMR" id="B2KB18"/>
<dbReference type="STRING" id="445932.Emin_0215"/>
<dbReference type="KEGG" id="emi:Emin_0215"/>
<dbReference type="HOGENOM" id="CLU_004131_4_2_0"/>
<dbReference type="OrthoDB" id="9763467at2"/>
<dbReference type="Proteomes" id="UP000001029">
    <property type="component" value="Chromosome"/>
</dbReference>
<dbReference type="GO" id="GO:0032300">
    <property type="term" value="C:mismatch repair complex"/>
    <property type="evidence" value="ECO:0007669"/>
    <property type="project" value="InterPro"/>
</dbReference>
<dbReference type="GO" id="GO:0005524">
    <property type="term" value="F:ATP binding"/>
    <property type="evidence" value="ECO:0007669"/>
    <property type="project" value="InterPro"/>
</dbReference>
<dbReference type="GO" id="GO:0016887">
    <property type="term" value="F:ATP hydrolysis activity"/>
    <property type="evidence" value="ECO:0007669"/>
    <property type="project" value="InterPro"/>
</dbReference>
<dbReference type="GO" id="GO:0140664">
    <property type="term" value="F:ATP-dependent DNA damage sensor activity"/>
    <property type="evidence" value="ECO:0007669"/>
    <property type="project" value="InterPro"/>
</dbReference>
<dbReference type="GO" id="GO:0030983">
    <property type="term" value="F:mismatched DNA binding"/>
    <property type="evidence" value="ECO:0007669"/>
    <property type="project" value="InterPro"/>
</dbReference>
<dbReference type="GO" id="GO:0006298">
    <property type="term" value="P:mismatch repair"/>
    <property type="evidence" value="ECO:0007669"/>
    <property type="project" value="UniProtKB-UniRule"/>
</dbReference>
<dbReference type="CDD" id="cd16926">
    <property type="entry name" value="HATPase_MutL-MLH-PMS-like"/>
    <property type="match status" value="1"/>
</dbReference>
<dbReference type="CDD" id="cd00782">
    <property type="entry name" value="MutL_Trans"/>
    <property type="match status" value="1"/>
</dbReference>
<dbReference type="FunFam" id="3.30.565.10:FF:000003">
    <property type="entry name" value="DNA mismatch repair endonuclease MutL"/>
    <property type="match status" value="1"/>
</dbReference>
<dbReference type="Gene3D" id="3.30.230.10">
    <property type="match status" value="1"/>
</dbReference>
<dbReference type="Gene3D" id="3.30.565.10">
    <property type="entry name" value="Histidine kinase-like ATPase, C-terminal domain"/>
    <property type="match status" value="1"/>
</dbReference>
<dbReference type="Gene3D" id="3.30.1540.20">
    <property type="entry name" value="MutL, C-terminal domain, dimerisation subdomain"/>
    <property type="match status" value="1"/>
</dbReference>
<dbReference type="Gene3D" id="3.30.1370.100">
    <property type="entry name" value="MutL, C-terminal domain, regulatory subdomain"/>
    <property type="match status" value="1"/>
</dbReference>
<dbReference type="HAMAP" id="MF_00149">
    <property type="entry name" value="DNA_mis_repair"/>
    <property type="match status" value="1"/>
</dbReference>
<dbReference type="InterPro" id="IPR014762">
    <property type="entry name" value="DNA_mismatch_repair_CS"/>
</dbReference>
<dbReference type="InterPro" id="IPR020667">
    <property type="entry name" value="DNA_mismatch_repair_MutL"/>
</dbReference>
<dbReference type="InterPro" id="IPR013507">
    <property type="entry name" value="DNA_mismatch_S5_2-like"/>
</dbReference>
<dbReference type="InterPro" id="IPR036890">
    <property type="entry name" value="HATPase_C_sf"/>
</dbReference>
<dbReference type="InterPro" id="IPR002099">
    <property type="entry name" value="MutL/Mlh/PMS"/>
</dbReference>
<dbReference type="InterPro" id="IPR038973">
    <property type="entry name" value="MutL/Mlh/Pms-like"/>
</dbReference>
<dbReference type="InterPro" id="IPR014790">
    <property type="entry name" value="MutL_C"/>
</dbReference>
<dbReference type="InterPro" id="IPR042120">
    <property type="entry name" value="MutL_C_dimsub"/>
</dbReference>
<dbReference type="InterPro" id="IPR042121">
    <property type="entry name" value="MutL_C_regsub"/>
</dbReference>
<dbReference type="InterPro" id="IPR037198">
    <property type="entry name" value="MutL_C_sf"/>
</dbReference>
<dbReference type="InterPro" id="IPR020568">
    <property type="entry name" value="Ribosomal_Su5_D2-typ_SF"/>
</dbReference>
<dbReference type="InterPro" id="IPR014721">
    <property type="entry name" value="Ribsml_uS5_D2-typ_fold_subgr"/>
</dbReference>
<dbReference type="NCBIfam" id="TIGR00585">
    <property type="entry name" value="mutl"/>
    <property type="match status" value="1"/>
</dbReference>
<dbReference type="PANTHER" id="PTHR10073">
    <property type="entry name" value="DNA MISMATCH REPAIR PROTEIN MLH, PMS, MUTL"/>
    <property type="match status" value="1"/>
</dbReference>
<dbReference type="PANTHER" id="PTHR10073:SF12">
    <property type="entry name" value="DNA MISMATCH REPAIR PROTEIN MLH1"/>
    <property type="match status" value="1"/>
</dbReference>
<dbReference type="Pfam" id="PF01119">
    <property type="entry name" value="DNA_mis_repair"/>
    <property type="match status" value="1"/>
</dbReference>
<dbReference type="Pfam" id="PF13589">
    <property type="entry name" value="HATPase_c_3"/>
    <property type="match status" value="1"/>
</dbReference>
<dbReference type="Pfam" id="PF08676">
    <property type="entry name" value="MutL_C"/>
    <property type="match status" value="1"/>
</dbReference>
<dbReference type="SMART" id="SM01340">
    <property type="entry name" value="DNA_mis_repair"/>
    <property type="match status" value="1"/>
</dbReference>
<dbReference type="SMART" id="SM00853">
    <property type="entry name" value="MutL_C"/>
    <property type="match status" value="1"/>
</dbReference>
<dbReference type="SUPFAM" id="SSF55874">
    <property type="entry name" value="ATPase domain of HSP90 chaperone/DNA topoisomerase II/histidine kinase"/>
    <property type="match status" value="1"/>
</dbReference>
<dbReference type="SUPFAM" id="SSF118116">
    <property type="entry name" value="DNA mismatch repair protein MutL"/>
    <property type="match status" value="1"/>
</dbReference>
<dbReference type="SUPFAM" id="SSF54211">
    <property type="entry name" value="Ribosomal protein S5 domain 2-like"/>
    <property type="match status" value="1"/>
</dbReference>
<dbReference type="PROSITE" id="PS00058">
    <property type="entry name" value="DNA_MISMATCH_REPAIR_1"/>
    <property type="match status" value="1"/>
</dbReference>
<reference key="1">
    <citation type="journal article" date="2009" name="Appl. Environ. Microbiol.">
        <title>Genomic analysis of 'Elusimicrobium minutum,' the first cultivated representative of the phylum 'Elusimicrobia' (formerly termite group 1).</title>
        <authorList>
            <person name="Herlemann D.P.R."/>
            <person name="Geissinger O."/>
            <person name="Ikeda-Ohtsubo W."/>
            <person name="Kunin V."/>
            <person name="Sun H."/>
            <person name="Lapidus A."/>
            <person name="Hugenholtz P."/>
            <person name="Brune A."/>
        </authorList>
    </citation>
    <scope>NUCLEOTIDE SEQUENCE [LARGE SCALE GENOMIC DNA]</scope>
    <source>
        <strain>Pei191</strain>
    </source>
</reference>
<sequence length="608" mass="67341">MGKIKILEESVAARIAAGEVIERPAGVLKELLENAVDAGADTINIDIDGAGKKLIRVNDNGSGMSKEDLTLSVVRHSTSKIKNFEDLDSLDTFGFRGEALYSVAAVSKLSISSAEEGGSGNKIIVEGGKLISVSPSPNIKGTTVEVKDLFYNTPARLKFLKSDNYERSLLLKVVEESALANLHVSYNVRTDGRLVYSFLASNGDFKKTVIQRAGQILGAEIAVSLISVEDERFGFKAFLTPLSKLTAVRDLQFFFINKRPLTSKTLQQAVYKAYHGRPKDRHPAFIVFMNMPAADFDVNIHPQKRDVKFAQENAVFGFLMNVTQRALTGAAQPVDINITPASPPAATMEFSFAKPRAEEPSYKPFGQNIVEENVFAPISKQAVVVKDFEDPVSYNPEPAEPKKEMGAHVQTDNPSWWQGPYRFLGSLHKSYLIYETELGLMLVDQHAARERVLYEEYLKKMEENELGIQPLMFPVTVDLPASNVENLMLWKDWLKTAGFEIEQFSPRTVLVNAVPNIFRFKEDSLKEFIVSLAGIVGDPLKSSDELKKKTVAMLACKKSIKAKEDVSMAEADALLLDLKRCQDGMHCPHGRPVMVSLSAAELTKKFGR</sequence>
<name>MUTL_ELUMP</name>
<accession>B2KB18</accession>
<organism>
    <name type="scientific">Elusimicrobium minutum (strain Pei191)</name>
    <dbReference type="NCBI Taxonomy" id="445932"/>
    <lineage>
        <taxon>Bacteria</taxon>
        <taxon>Pseudomonadati</taxon>
        <taxon>Elusimicrobiota</taxon>
        <taxon>Elusimicrobia</taxon>
        <taxon>Elusimicrobiales</taxon>
        <taxon>Elusimicrobiaceae</taxon>
        <taxon>Elusimicrobium</taxon>
    </lineage>
</organism>
<gene>
    <name evidence="1" type="primary">mutL</name>
    <name type="ordered locus">Emin_0215</name>
</gene>
<keyword id="KW-0227">DNA damage</keyword>
<keyword id="KW-0234">DNA repair</keyword>
<keyword id="KW-1185">Reference proteome</keyword>